<protein>
    <recommendedName>
        <fullName evidence="1">Argininosuccinate lyase</fullName>
        <shortName evidence="1">ASAL</shortName>
        <ecNumber evidence="1">4.3.2.1</ecNumber>
    </recommendedName>
    <alternativeName>
        <fullName evidence="1">Arginosuccinase</fullName>
    </alternativeName>
</protein>
<organism>
    <name type="scientific">Yersinia pseudotuberculosis serotype O:1b (strain IP 31758)</name>
    <dbReference type="NCBI Taxonomy" id="349747"/>
    <lineage>
        <taxon>Bacteria</taxon>
        <taxon>Pseudomonadati</taxon>
        <taxon>Pseudomonadota</taxon>
        <taxon>Gammaproteobacteria</taxon>
        <taxon>Enterobacterales</taxon>
        <taxon>Yersiniaceae</taxon>
        <taxon>Yersinia</taxon>
    </lineage>
</organism>
<reference key="1">
    <citation type="journal article" date="2007" name="PLoS Genet.">
        <title>The complete genome sequence of Yersinia pseudotuberculosis IP31758, the causative agent of Far East scarlet-like fever.</title>
        <authorList>
            <person name="Eppinger M."/>
            <person name="Rosovitz M.J."/>
            <person name="Fricke W.F."/>
            <person name="Rasko D.A."/>
            <person name="Kokorina G."/>
            <person name="Fayolle C."/>
            <person name="Lindler L.E."/>
            <person name="Carniel E."/>
            <person name="Ravel J."/>
        </authorList>
    </citation>
    <scope>NUCLEOTIDE SEQUENCE [LARGE SCALE GENOMIC DNA]</scope>
    <source>
        <strain>IP 31758</strain>
    </source>
</reference>
<proteinExistence type="inferred from homology"/>
<gene>
    <name evidence="1" type="primary">argH</name>
    <name type="ordered locus">YpsIP31758_0129</name>
</gene>
<dbReference type="EC" id="4.3.2.1" evidence="1"/>
<dbReference type="EMBL" id="CP000720">
    <property type="protein sequence ID" value="ABS46168.1"/>
    <property type="molecule type" value="Genomic_DNA"/>
</dbReference>
<dbReference type="RefSeq" id="WP_002209487.1">
    <property type="nucleotide sequence ID" value="NC_009708.1"/>
</dbReference>
<dbReference type="SMR" id="A7FD01"/>
<dbReference type="GeneID" id="57974777"/>
<dbReference type="KEGG" id="ypi:YpsIP31758_0129"/>
<dbReference type="HOGENOM" id="CLU_027272_2_3_6"/>
<dbReference type="UniPathway" id="UPA00068">
    <property type="reaction ID" value="UER00114"/>
</dbReference>
<dbReference type="Proteomes" id="UP000002412">
    <property type="component" value="Chromosome"/>
</dbReference>
<dbReference type="GO" id="GO:0005829">
    <property type="term" value="C:cytosol"/>
    <property type="evidence" value="ECO:0007669"/>
    <property type="project" value="TreeGrafter"/>
</dbReference>
<dbReference type="GO" id="GO:0004056">
    <property type="term" value="F:argininosuccinate lyase activity"/>
    <property type="evidence" value="ECO:0007669"/>
    <property type="project" value="UniProtKB-UniRule"/>
</dbReference>
<dbReference type="GO" id="GO:0042450">
    <property type="term" value="P:arginine biosynthetic process via ornithine"/>
    <property type="evidence" value="ECO:0007669"/>
    <property type="project" value="InterPro"/>
</dbReference>
<dbReference type="GO" id="GO:0006526">
    <property type="term" value="P:L-arginine biosynthetic process"/>
    <property type="evidence" value="ECO:0007669"/>
    <property type="project" value="UniProtKB-UniRule"/>
</dbReference>
<dbReference type="CDD" id="cd01359">
    <property type="entry name" value="Argininosuccinate_lyase"/>
    <property type="match status" value="1"/>
</dbReference>
<dbReference type="FunFam" id="1.10.275.10:FF:000004">
    <property type="entry name" value="Argininosuccinate lyase"/>
    <property type="match status" value="1"/>
</dbReference>
<dbReference type="FunFam" id="1.10.40.30:FF:000001">
    <property type="entry name" value="Argininosuccinate lyase"/>
    <property type="match status" value="1"/>
</dbReference>
<dbReference type="FunFam" id="1.20.200.10:FF:000006">
    <property type="entry name" value="Argininosuccinate lyase"/>
    <property type="match status" value="1"/>
</dbReference>
<dbReference type="Gene3D" id="1.10.40.30">
    <property type="entry name" value="Fumarase/aspartase (C-terminal domain)"/>
    <property type="match status" value="1"/>
</dbReference>
<dbReference type="Gene3D" id="1.20.200.10">
    <property type="entry name" value="Fumarase/aspartase (Central domain)"/>
    <property type="match status" value="1"/>
</dbReference>
<dbReference type="Gene3D" id="1.10.275.10">
    <property type="entry name" value="Fumarase/aspartase (N-terminal domain)"/>
    <property type="match status" value="1"/>
</dbReference>
<dbReference type="HAMAP" id="MF_00006">
    <property type="entry name" value="Arg_succ_lyase"/>
    <property type="match status" value="1"/>
</dbReference>
<dbReference type="InterPro" id="IPR029419">
    <property type="entry name" value="Arg_succ_lyase_C"/>
</dbReference>
<dbReference type="InterPro" id="IPR009049">
    <property type="entry name" value="Argininosuccinate_lyase"/>
</dbReference>
<dbReference type="InterPro" id="IPR024083">
    <property type="entry name" value="Fumarase/histidase_N"/>
</dbReference>
<dbReference type="InterPro" id="IPR020557">
    <property type="entry name" value="Fumarate_lyase_CS"/>
</dbReference>
<dbReference type="InterPro" id="IPR000362">
    <property type="entry name" value="Fumarate_lyase_fam"/>
</dbReference>
<dbReference type="InterPro" id="IPR022761">
    <property type="entry name" value="Fumarate_lyase_N"/>
</dbReference>
<dbReference type="InterPro" id="IPR008948">
    <property type="entry name" value="L-Aspartase-like"/>
</dbReference>
<dbReference type="NCBIfam" id="TIGR00838">
    <property type="entry name" value="argH"/>
    <property type="match status" value="1"/>
</dbReference>
<dbReference type="NCBIfam" id="NF008964">
    <property type="entry name" value="PRK12308.1"/>
    <property type="match status" value="1"/>
</dbReference>
<dbReference type="PANTHER" id="PTHR43814">
    <property type="entry name" value="ARGININOSUCCINATE LYASE"/>
    <property type="match status" value="1"/>
</dbReference>
<dbReference type="PANTHER" id="PTHR43814:SF1">
    <property type="entry name" value="ARGININOSUCCINATE LYASE"/>
    <property type="match status" value="1"/>
</dbReference>
<dbReference type="Pfam" id="PF14698">
    <property type="entry name" value="ASL_C2"/>
    <property type="match status" value="1"/>
</dbReference>
<dbReference type="Pfam" id="PF00206">
    <property type="entry name" value="Lyase_1"/>
    <property type="match status" value="1"/>
</dbReference>
<dbReference type="PRINTS" id="PR00145">
    <property type="entry name" value="ARGSUCLYASE"/>
</dbReference>
<dbReference type="PRINTS" id="PR00149">
    <property type="entry name" value="FUMRATELYASE"/>
</dbReference>
<dbReference type="SUPFAM" id="SSF48557">
    <property type="entry name" value="L-aspartase-like"/>
    <property type="match status" value="1"/>
</dbReference>
<dbReference type="PROSITE" id="PS00163">
    <property type="entry name" value="FUMARATE_LYASES"/>
    <property type="match status" value="1"/>
</dbReference>
<feature type="chain" id="PRO_1000057057" description="Argininosuccinate lyase">
    <location>
        <begin position="1"/>
        <end position="457"/>
    </location>
</feature>
<name>ARLY_YERP3</name>
<keyword id="KW-0028">Amino-acid biosynthesis</keyword>
<keyword id="KW-0055">Arginine biosynthesis</keyword>
<keyword id="KW-0963">Cytoplasm</keyword>
<keyword id="KW-0456">Lyase</keyword>
<comment type="catalytic activity">
    <reaction evidence="1">
        <text>2-(N(omega)-L-arginino)succinate = fumarate + L-arginine</text>
        <dbReference type="Rhea" id="RHEA:24020"/>
        <dbReference type="ChEBI" id="CHEBI:29806"/>
        <dbReference type="ChEBI" id="CHEBI:32682"/>
        <dbReference type="ChEBI" id="CHEBI:57472"/>
        <dbReference type="EC" id="4.3.2.1"/>
    </reaction>
</comment>
<comment type="pathway">
    <text evidence="1">Amino-acid biosynthesis; L-arginine biosynthesis; L-arginine from L-ornithine and carbamoyl phosphate: step 3/3.</text>
</comment>
<comment type="subcellular location">
    <subcellularLocation>
        <location evidence="1">Cytoplasm</location>
    </subcellularLocation>
</comment>
<comment type="similarity">
    <text evidence="1">Belongs to the lyase 1 family. Argininosuccinate lyase subfamily.</text>
</comment>
<sequence length="457" mass="50100">MALWGGRFSQAADQRFKQFNDSLRFDYRLAEQDIIGSVAWSKALVTVGVLNADEQQQLEQALSVLLEEVQANPHAILASDAEDIHSWVETKLIDKVGDLGKKLHTGRSRNDQVATDLKLWCKFQITELQTAVQQLQQALVMTAEANQDAVMPGYTHLQRAQPVTFAHWCLAYVEMLSRDESRLQDTLKRLDVSPLGCGALAGTAYAIDREQLAGWLGFASATRNSLDSVSDRDHVLELLSDASIGMVHLSRFAEDLIFFNSGEAAFVDLSDRVTSGSSLMPQKKNPDALELIRGKCGRVQGALTGMTMTLKGLPLAYNKDMQEDKEGLFDALDTWLDCLHMAALVLDGIQVKRPRCKEAAEQGYANATELADYLVAKGVPFREAHHIVGEAVVEAIRQGKALEALALSDLQQFSSVIGDDVYPILALQSCLDKRVAKGGVSPQQVASAIAEAKARLF</sequence>
<evidence type="ECO:0000255" key="1">
    <source>
        <dbReference type="HAMAP-Rule" id="MF_00006"/>
    </source>
</evidence>
<accession>A7FD01</accession>